<proteinExistence type="evidence at protein level"/>
<name>TPS1_XANST</name>
<gene>
    <name evidence="4" type="primary">TPS1</name>
</gene>
<reference key="1">
    <citation type="journal article" date="2016" name="Plant Cell Physiol.">
        <title>Identification and functional characterization of sesquiterpene synthases from Xanthium strumarium.</title>
        <authorList>
            <person name="Li Y."/>
            <person name="Chen F."/>
            <person name="Li Z."/>
            <person name="Li C."/>
            <person name="Zhang Y."/>
        </authorList>
    </citation>
    <scope>NUCLEOTIDE SEQUENCE [MRNA]</scope>
    <scope>FUNCTION</scope>
    <scope>CATALYTIC ACTIVITY</scope>
    <scope>TISSUE SPECIFICITY</scope>
    <scope>MOTIF</scope>
    <source>
        <tissue>Leaf</tissue>
    </source>
</reference>
<feature type="chain" id="PRO_0000455106" description="Sesquiterpene synthase TPS1">
    <location>
        <begin position="1"/>
        <end position="548"/>
    </location>
</feature>
<feature type="short sequence motif" description="DDXXD motif" evidence="6">
    <location>
        <begin position="301"/>
        <end position="305"/>
    </location>
</feature>
<feature type="binding site" evidence="1">
    <location>
        <position position="264"/>
    </location>
    <ligand>
        <name>(2E,6E)-farnesyl diphosphate</name>
        <dbReference type="ChEBI" id="CHEBI:175763"/>
    </ligand>
</feature>
<feature type="binding site" evidence="1">
    <location>
        <position position="301"/>
    </location>
    <ligand>
        <name>(2E,6E)-farnesyl diphosphate</name>
        <dbReference type="ChEBI" id="CHEBI:175763"/>
    </ligand>
</feature>
<feature type="binding site" evidence="1">
    <location>
        <position position="301"/>
    </location>
    <ligand>
        <name>Mg(2+)</name>
        <dbReference type="ChEBI" id="CHEBI:18420"/>
        <label>1</label>
    </ligand>
</feature>
<feature type="binding site" evidence="1">
    <location>
        <position position="301"/>
    </location>
    <ligand>
        <name>Mg(2+)</name>
        <dbReference type="ChEBI" id="CHEBI:18420"/>
        <label>2</label>
    </ligand>
</feature>
<feature type="binding site" evidence="1">
    <location>
        <position position="305"/>
    </location>
    <ligand>
        <name>(2E,6E)-farnesyl diphosphate</name>
        <dbReference type="ChEBI" id="CHEBI:175763"/>
    </ligand>
</feature>
<feature type="binding site" evidence="1">
    <location>
        <position position="305"/>
    </location>
    <ligand>
        <name>Mg(2+)</name>
        <dbReference type="ChEBI" id="CHEBI:18420"/>
        <label>1</label>
    </ligand>
</feature>
<feature type="binding site" evidence="1">
    <location>
        <position position="305"/>
    </location>
    <ligand>
        <name>Mg(2+)</name>
        <dbReference type="ChEBI" id="CHEBI:18420"/>
        <label>2</label>
    </ligand>
</feature>
<feature type="binding site" evidence="1">
    <location>
        <position position="442"/>
    </location>
    <ligand>
        <name>(2E,6E)-farnesyl diphosphate</name>
        <dbReference type="ChEBI" id="CHEBI:175763"/>
    </ligand>
</feature>
<feature type="binding site" evidence="1">
    <location>
        <position position="445"/>
    </location>
    <ligand>
        <name>(2E,6E)-farnesyl diphosphate</name>
        <dbReference type="ChEBI" id="CHEBI:175763"/>
    </ligand>
</feature>
<feature type="binding site" evidence="1">
    <location>
        <position position="445"/>
    </location>
    <ligand>
        <name>Mg(2+)</name>
        <dbReference type="ChEBI" id="CHEBI:18420"/>
        <label>3</label>
    </ligand>
</feature>
<feature type="binding site" evidence="1">
    <location>
        <position position="453"/>
    </location>
    <ligand>
        <name>Mg(2+)</name>
        <dbReference type="ChEBI" id="CHEBI:18420"/>
        <label>3</label>
    </ligand>
</feature>
<keyword id="KW-0963">Cytoplasm</keyword>
<keyword id="KW-0456">Lyase</keyword>
<keyword id="KW-0460">Magnesium</keyword>
<keyword id="KW-0479">Metal-binding</keyword>
<protein>
    <recommendedName>
        <fullName evidence="5">Sesquiterpene synthase TPS1</fullName>
    </recommendedName>
    <alternativeName>
        <fullName evidence="4">Beta-caryophyllene synthase</fullName>
        <ecNumber evidence="3">4.2.3.57</ecNumber>
    </alternativeName>
    <alternativeName>
        <fullName evidence="4">Beta-copaene synthase</fullName>
        <ecNumber evidence="3">4.2.3.127</ecNumber>
    </alternativeName>
    <alternativeName>
        <fullName evidence="4">Germacrene D synthase</fullName>
        <ecNumber evidence="3">4.2.3.-</ecNumber>
    </alternativeName>
    <alternativeName>
        <fullName evidence="4">Terpene synthase 1</fullName>
        <shortName evidence="4">XsTPS1</shortName>
    </alternativeName>
</protein>
<organism>
    <name type="scientific">Xanthium strumarium</name>
    <name type="common">Rough cocklebur</name>
    <dbReference type="NCBI Taxonomy" id="318068"/>
    <lineage>
        <taxon>Eukaryota</taxon>
        <taxon>Viridiplantae</taxon>
        <taxon>Streptophyta</taxon>
        <taxon>Embryophyta</taxon>
        <taxon>Tracheophyta</taxon>
        <taxon>Spermatophyta</taxon>
        <taxon>Magnoliopsida</taxon>
        <taxon>eudicotyledons</taxon>
        <taxon>Gunneridae</taxon>
        <taxon>Pentapetalae</taxon>
        <taxon>asterids</taxon>
        <taxon>campanulids</taxon>
        <taxon>Asterales</taxon>
        <taxon>Asteraceae</taxon>
        <taxon>Asteroideae</taxon>
        <taxon>Heliantheae alliance</taxon>
        <taxon>Heliantheae</taxon>
        <taxon>Xanthium</taxon>
    </lineage>
</organism>
<evidence type="ECO:0000250" key="1">
    <source>
        <dbReference type="UniProtKB" id="Q40577"/>
    </source>
</evidence>
<evidence type="ECO:0000250" key="2">
    <source>
        <dbReference type="UniProtKB" id="Q6Q3H2"/>
    </source>
</evidence>
<evidence type="ECO:0000269" key="3">
    <source>
    </source>
</evidence>
<evidence type="ECO:0000303" key="4">
    <source>
    </source>
</evidence>
<evidence type="ECO:0000305" key="5"/>
<evidence type="ECO:0000305" key="6">
    <source>
    </source>
</evidence>
<accession>A0A142BX70</accession>
<sequence length="548" mass="64501">MEVKQEVLRPVSNFKPSIWGDQFLVYDEKEEDATVAQLIECLKEEVRKEIMVALDDRNKHANLLKLVSDIQRLGISYCFKQEIEQALGHIYDVYGDEWEGGSLSIWFRLLRQQGFFVSCDIFKKYKNNDGTFKDSLTRNVEGMLELYEAAYLRVRGEVILDDALAFTKGQLEKITKDPLQWNCNLSLSKHIKEALERPIWKRLPRLEVVRYIPFYEQQDSHNESLLRLAKLEFNRLQSLHKRELSQLSKWWKDFEPTKNLHYVRDRLVELYFWVLGVYFEPQYSRSRIFLTKVIKIATVLDDTYDNYGVYDELEIFTDAIDRWSITCIDALPDYMKFIYKILLDTYGEMEEIMASEGKAYQVYYAKEALKELSRNYMIEAKWTNEGYEPTLKEHETVSFITAGYQMLTPSSFVGMGETVTEEPFKWALTFPPLIKSASVVSRIMDDIIGHKEEGKRKHVVSTVECYMKEHDVTEEYVYDLFKERVEDAWKDMNLELLTCENIPLALKMRTINLARVIESIYKYDDNLKNVGAEIQDNIKSCFIISMSI</sequence>
<comment type="function">
    <text evidence="3">Sesquiterpene synthase involved in the biosynthesis of volatile compounds (PubMed:26858282). Mediates the conversion of (2E,6E)-farnesyl diphosphate (FPP) into germacrene D, (-)-(E)-beta-caryophyllene and beta-copaene (PubMed:26858282).</text>
</comment>
<comment type="catalytic activity">
    <reaction evidence="3">
        <text>(2E,6E)-farnesyl diphosphate = germacrene D + diphosphate</text>
        <dbReference type="Rhea" id="RHEA:68716"/>
        <dbReference type="ChEBI" id="CHEBI:33019"/>
        <dbReference type="ChEBI" id="CHEBI:49045"/>
        <dbReference type="ChEBI" id="CHEBI:175763"/>
    </reaction>
    <physiologicalReaction direction="left-to-right" evidence="3">
        <dbReference type="Rhea" id="RHEA:68717"/>
    </physiologicalReaction>
</comment>
<comment type="catalytic activity">
    <reaction evidence="3">
        <text>(2E,6E)-farnesyl diphosphate = (-)-(E)-beta-caryophyllene + diphosphate</text>
        <dbReference type="Rhea" id="RHEA:28294"/>
        <dbReference type="ChEBI" id="CHEBI:10357"/>
        <dbReference type="ChEBI" id="CHEBI:33019"/>
        <dbReference type="ChEBI" id="CHEBI:175763"/>
        <dbReference type="EC" id="4.2.3.57"/>
    </reaction>
    <physiologicalReaction direction="left-to-right" evidence="3">
        <dbReference type="Rhea" id="RHEA:28295"/>
    </physiologicalReaction>
</comment>
<comment type="catalytic activity">
    <reaction evidence="3">
        <text>(2E,6E)-farnesyl diphosphate = beta-copaene + diphosphate</text>
        <dbReference type="Rhea" id="RHEA:33111"/>
        <dbReference type="ChEBI" id="CHEBI:33019"/>
        <dbReference type="ChEBI" id="CHEBI:64799"/>
        <dbReference type="ChEBI" id="CHEBI:175763"/>
        <dbReference type="EC" id="4.2.3.127"/>
    </reaction>
    <physiologicalReaction direction="left-to-right" evidence="3">
        <dbReference type="Rhea" id="RHEA:33112"/>
    </physiologicalReaction>
</comment>
<comment type="cofactor">
    <cofactor evidence="1">
        <name>Mg(2+)</name>
        <dbReference type="ChEBI" id="CHEBI:18420"/>
    </cofactor>
    <text evidence="1">Binds 3 Mg(2+) ions per subunit.</text>
</comment>
<comment type="pathway">
    <text evidence="5">Secondary metabolite biosynthesis; terpenoid biosynthesis.</text>
</comment>
<comment type="subunit">
    <text evidence="1">Monomer.</text>
</comment>
<comment type="subcellular location">
    <subcellularLocation>
        <location evidence="2">Cytoplasm</location>
    </subcellularLocation>
</comment>
<comment type="tissue specificity">
    <text evidence="3">Expressed in leaves and stems.</text>
</comment>
<comment type="domain">
    <text evidence="6">The Asp-Asp-Xaa-Xaa-Asp/Glu (DDXXD/E) motif is important for the catalytic activity, presumably through binding to Mg(2+).</text>
</comment>
<comment type="similarity">
    <text evidence="5">Belongs to the terpene synthase family. Tpsa subfamily.</text>
</comment>
<dbReference type="EC" id="4.2.3.57" evidence="3"/>
<dbReference type="EC" id="4.2.3.127" evidence="3"/>
<dbReference type="EC" id="4.2.3.-" evidence="3"/>
<dbReference type="EMBL" id="KT317705">
    <property type="protein sequence ID" value="AMP42987.1"/>
    <property type="molecule type" value="mRNA"/>
</dbReference>
<dbReference type="SMR" id="A0A142BX70"/>
<dbReference type="BRENDA" id="4.2.3.75">
    <property type="organism ID" value="15340"/>
</dbReference>
<dbReference type="UniPathway" id="UPA00213"/>
<dbReference type="GO" id="GO:0005737">
    <property type="term" value="C:cytoplasm"/>
    <property type="evidence" value="ECO:0007669"/>
    <property type="project" value="UniProtKB-SubCell"/>
</dbReference>
<dbReference type="GO" id="GO:0000287">
    <property type="term" value="F:magnesium ion binding"/>
    <property type="evidence" value="ECO:0007669"/>
    <property type="project" value="InterPro"/>
</dbReference>
<dbReference type="GO" id="GO:0010333">
    <property type="term" value="F:terpene synthase activity"/>
    <property type="evidence" value="ECO:0007669"/>
    <property type="project" value="InterPro"/>
</dbReference>
<dbReference type="GO" id="GO:0016102">
    <property type="term" value="P:diterpenoid biosynthetic process"/>
    <property type="evidence" value="ECO:0007669"/>
    <property type="project" value="InterPro"/>
</dbReference>
<dbReference type="GO" id="GO:0046246">
    <property type="term" value="P:terpene biosynthetic process"/>
    <property type="evidence" value="ECO:0007669"/>
    <property type="project" value="UniProtKB-ARBA"/>
</dbReference>
<dbReference type="CDD" id="cd00684">
    <property type="entry name" value="Terpene_cyclase_plant_C1"/>
    <property type="match status" value="1"/>
</dbReference>
<dbReference type="FunFam" id="1.10.600.10:FF:000007">
    <property type="entry name" value="Isoprene synthase, chloroplastic"/>
    <property type="match status" value="1"/>
</dbReference>
<dbReference type="FunFam" id="1.50.10.130:FF:000001">
    <property type="entry name" value="Isoprene synthase, chloroplastic"/>
    <property type="match status" value="1"/>
</dbReference>
<dbReference type="Gene3D" id="1.10.600.10">
    <property type="entry name" value="Farnesyl Diphosphate Synthase"/>
    <property type="match status" value="1"/>
</dbReference>
<dbReference type="Gene3D" id="1.50.10.130">
    <property type="entry name" value="Terpene synthase, N-terminal domain"/>
    <property type="match status" value="1"/>
</dbReference>
<dbReference type="InterPro" id="IPR008949">
    <property type="entry name" value="Isoprenoid_synthase_dom_sf"/>
</dbReference>
<dbReference type="InterPro" id="IPR034741">
    <property type="entry name" value="Terpene_cyclase-like_1_C"/>
</dbReference>
<dbReference type="InterPro" id="IPR044814">
    <property type="entry name" value="Terpene_cyclase_plant_C1"/>
</dbReference>
<dbReference type="InterPro" id="IPR001906">
    <property type="entry name" value="Terpene_synth_N"/>
</dbReference>
<dbReference type="InterPro" id="IPR036965">
    <property type="entry name" value="Terpene_synth_N_sf"/>
</dbReference>
<dbReference type="InterPro" id="IPR050148">
    <property type="entry name" value="Terpene_synthase-like"/>
</dbReference>
<dbReference type="InterPro" id="IPR005630">
    <property type="entry name" value="Terpene_synthase_metal-bd"/>
</dbReference>
<dbReference type="InterPro" id="IPR008930">
    <property type="entry name" value="Terpenoid_cyclase/PrenylTrfase"/>
</dbReference>
<dbReference type="PANTHER" id="PTHR31225">
    <property type="entry name" value="OS04G0344100 PROTEIN-RELATED"/>
    <property type="match status" value="1"/>
</dbReference>
<dbReference type="PANTHER" id="PTHR31225:SF196">
    <property type="entry name" value="TERPENOID CYCLASES_PROTEIN PRENYLTRANSFERASE ALPHA-ALPHA TOROID-RELATED"/>
    <property type="match status" value="1"/>
</dbReference>
<dbReference type="Pfam" id="PF01397">
    <property type="entry name" value="Terpene_synth"/>
    <property type="match status" value="1"/>
</dbReference>
<dbReference type="Pfam" id="PF03936">
    <property type="entry name" value="Terpene_synth_C"/>
    <property type="match status" value="1"/>
</dbReference>
<dbReference type="SFLD" id="SFLDS00005">
    <property type="entry name" value="Isoprenoid_Synthase_Type_I"/>
    <property type="match status" value="1"/>
</dbReference>
<dbReference type="SFLD" id="SFLDG01019">
    <property type="entry name" value="Terpene_Cyclase_Like_1_C_Termi"/>
    <property type="match status" value="1"/>
</dbReference>
<dbReference type="SUPFAM" id="SSF48239">
    <property type="entry name" value="Terpenoid cyclases/Protein prenyltransferases"/>
    <property type="match status" value="1"/>
</dbReference>
<dbReference type="SUPFAM" id="SSF48576">
    <property type="entry name" value="Terpenoid synthases"/>
    <property type="match status" value="1"/>
</dbReference>